<reference key="1">
    <citation type="journal article" date="2002" name="Nature">
        <title>The genome sequence of Schizosaccharomyces pombe.</title>
        <authorList>
            <person name="Wood V."/>
            <person name="Gwilliam R."/>
            <person name="Rajandream M.A."/>
            <person name="Lyne M.H."/>
            <person name="Lyne R."/>
            <person name="Stewart A."/>
            <person name="Sgouros J.G."/>
            <person name="Peat N."/>
            <person name="Hayles J."/>
            <person name="Baker S.G."/>
            <person name="Basham D."/>
            <person name="Bowman S."/>
            <person name="Brooks K."/>
            <person name="Brown D."/>
            <person name="Brown S."/>
            <person name="Chillingworth T."/>
            <person name="Churcher C.M."/>
            <person name="Collins M."/>
            <person name="Connor R."/>
            <person name="Cronin A."/>
            <person name="Davis P."/>
            <person name="Feltwell T."/>
            <person name="Fraser A."/>
            <person name="Gentles S."/>
            <person name="Goble A."/>
            <person name="Hamlin N."/>
            <person name="Harris D.E."/>
            <person name="Hidalgo J."/>
            <person name="Hodgson G."/>
            <person name="Holroyd S."/>
            <person name="Hornsby T."/>
            <person name="Howarth S."/>
            <person name="Huckle E.J."/>
            <person name="Hunt S."/>
            <person name="Jagels K."/>
            <person name="James K.D."/>
            <person name="Jones L."/>
            <person name="Jones M."/>
            <person name="Leather S."/>
            <person name="McDonald S."/>
            <person name="McLean J."/>
            <person name="Mooney P."/>
            <person name="Moule S."/>
            <person name="Mungall K.L."/>
            <person name="Murphy L.D."/>
            <person name="Niblett D."/>
            <person name="Odell C."/>
            <person name="Oliver K."/>
            <person name="O'Neil S."/>
            <person name="Pearson D."/>
            <person name="Quail M.A."/>
            <person name="Rabbinowitsch E."/>
            <person name="Rutherford K.M."/>
            <person name="Rutter S."/>
            <person name="Saunders D."/>
            <person name="Seeger K."/>
            <person name="Sharp S."/>
            <person name="Skelton J."/>
            <person name="Simmonds M.N."/>
            <person name="Squares R."/>
            <person name="Squares S."/>
            <person name="Stevens K."/>
            <person name="Taylor K."/>
            <person name="Taylor R.G."/>
            <person name="Tivey A."/>
            <person name="Walsh S.V."/>
            <person name="Warren T."/>
            <person name="Whitehead S."/>
            <person name="Woodward J.R."/>
            <person name="Volckaert G."/>
            <person name="Aert R."/>
            <person name="Robben J."/>
            <person name="Grymonprez B."/>
            <person name="Weltjens I."/>
            <person name="Vanstreels E."/>
            <person name="Rieger M."/>
            <person name="Schaefer M."/>
            <person name="Mueller-Auer S."/>
            <person name="Gabel C."/>
            <person name="Fuchs M."/>
            <person name="Duesterhoeft A."/>
            <person name="Fritzc C."/>
            <person name="Holzer E."/>
            <person name="Moestl D."/>
            <person name="Hilbert H."/>
            <person name="Borzym K."/>
            <person name="Langer I."/>
            <person name="Beck A."/>
            <person name="Lehrach H."/>
            <person name="Reinhardt R."/>
            <person name="Pohl T.M."/>
            <person name="Eger P."/>
            <person name="Zimmermann W."/>
            <person name="Wedler H."/>
            <person name="Wambutt R."/>
            <person name="Purnelle B."/>
            <person name="Goffeau A."/>
            <person name="Cadieu E."/>
            <person name="Dreano S."/>
            <person name="Gloux S."/>
            <person name="Lelaure V."/>
            <person name="Mottier S."/>
            <person name="Galibert F."/>
            <person name="Aves S.J."/>
            <person name="Xiang Z."/>
            <person name="Hunt C."/>
            <person name="Moore K."/>
            <person name="Hurst S.M."/>
            <person name="Lucas M."/>
            <person name="Rochet M."/>
            <person name="Gaillardin C."/>
            <person name="Tallada V.A."/>
            <person name="Garzon A."/>
            <person name="Thode G."/>
            <person name="Daga R.R."/>
            <person name="Cruzado L."/>
            <person name="Jimenez J."/>
            <person name="Sanchez M."/>
            <person name="del Rey F."/>
            <person name="Benito J."/>
            <person name="Dominguez A."/>
            <person name="Revuelta J.L."/>
            <person name="Moreno S."/>
            <person name="Armstrong J."/>
            <person name="Forsburg S.L."/>
            <person name="Cerutti L."/>
            <person name="Lowe T."/>
            <person name="McCombie W.R."/>
            <person name="Paulsen I."/>
            <person name="Potashkin J."/>
            <person name="Shpakovski G.V."/>
            <person name="Ussery D."/>
            <person name="Barrell B.G."/>
            <person name="Nurse P."/>
        </authorList>
    </citation>
    <scope>NUCLEOTIDE SEQUENCE [LARGE SCALE GENOMIC DNA]</scope>
    <source>
        <strain>972 / ATCC 24843</strain>
    </source>
</reference>
<reference key="2">
    <citation type="journal article" date="2011" name="Science">
        <title>Comparative functional genomics of the fission yeasts.</title>
        <authorList>
            <person name="Rhind N."/>
            <person name="Chen Z."/>
            <person name="Yassour M."/>
            <person name="Thompson D.A."/>
            <person name="Haas B.J."/>
            <person name="Habib N."/>
            <person name="Wapinski I."/>
            <person name="Roy S."/>
            <person name="Lin M.F."/>
            <person name="Heiman D.I."/>
            <person name="Young S.K."/>
            <person name="Furuya K."/>
            <person name="Guo Y."/>
            <person name="Pidoux A."/>
            <person name="Chen H.M."/>
            <person name="Robbertse B."/>
            <person name="Goldberg J.M."/>
            <person name="Aoki K."/>
            <person name="Bayne E.H."/>
            <person name="Berlin A.M."/>
            <person name="Desjardins C.A."/>
            <person name="Dobbs E."/>
            <person name="Dukaj L."/>
            <person name="Fan L."/>
            <person name="FitzGerald M.G."/>
            <person name="French C."/>
            <person name="Gujja S."/>
            <person name="Hansen K."/>
            <person name="Keifenheim D."/>
            <person name="Levin J.Z."/>
            <person name="Mosher R.A."/>
            <person name="Mueller C.A."/>
            <person name="Pfiffner J."/>
            <person name="Priest M."/>
            <person name="Russ C."/>
            <person name="Smialowska A."/>
            <person name="Swoboda P."/>
            <person name="Sykes S.M."/>
            <person name="Vaughn M."/>
            <person name="Vengrova S."/>
            <person name="Yoder R."/>
            <person name="Zeng Q."/>
            <person name="Allshire R."/>
            <person name="Baulcombe D."/>
            <person name="Birren B.W."/>
            <person name="Brown W."/>
            <person name="Ekwall K."/>
            <person name="Kellis M."/>
            <person name="Leatherwood J."/>
            <person name="Levin H."/>
            <person name="Margalit H."/>
            <person name="Martienssen R."/>
            <person name="Nieduszynski C.A."/>
            <person name="Spatafora J.W."/>
            <person name="Friedman N."/>
            <person name="Dalgaard J.Z."/>
            <person name="Baumann P."/>
            <person name="Niki H."/>
            <person name="Regev A."/>
            <person name="Nusbaum C."/>
        </authorList>
    </citation>
    <scope>REVISION OF GENE MODEL</scope>
</reference>
<reference key="3">
    <citation type="journal article" date="2006" name="Nat. Biotechnol.">
        <title>ORFeome cloning and global analysis of protein localization in the fission yeast Schizosaccharomyces pombe.</title>
        <authorList>
            <person name="Matsuyama A."/>
            <person name="Arai R."/>
            <person name="Yashiroda Y."/>
            <person name="Shirai A."/>
            <person name="Kamata A."/>
            <person name="Sekido S."/>
            <person name="Kobayashi Y."/>
            <person name="Hashimoto A."/>
            <person name="Hamamoto M."/>
            <person name="Hiraoka Y."/>
            <person name="Horinouchi S."/>
            <person name="Yoshida M."/>
        </authorList>
    </citation>
    <scope>SUBCELLULAR LOCATION [LARGE SCALE ANALYSIS]</scope>
</reference>
<proteinExistence type="inferred from homology"/>
<keyword id="KW-0472">Membrane</keyword>
<keyword id="KW-0496">Mitochondrion</keyword>
<keyword id="KW-0999">Mitochondrion inner membrane</keyword>
<keyword id="KW-1185">Reference proteome</keyword>
<keyword id="KW-0677">Repeat</keyword>
<keyword id="KW-0812">Transmembrane</keyword>
<keyword id="KW-1133">Transmembrane helix</keyword>
<keyword id="KW-0813">Transport</keyword>
<comment type="subcellular location">
    <subcellularLocation>
        <location evidence="2">Mitochondrion inner membrane</location>
        <topology evidence="2">Multi-pass membrane protein</topology>
    </subcellularLocation>
</comment>
<comment type="similarity">
    <text evidence="3">Belongs to the mitochondrial carrier (TC 2.A.29) family.</text>
</comment>
<protein>
    <recommendedName>
        <fullName>Uncharacterized mitochondrial carrier C1604.04</fullName>
    </recommendedName>
</protein>
<accession>O94370</accession>
<gene>
    <name type="ORF">SPBC1604.04</name>
</gene>
<evidence type="ECO:0000255" key="1"/>
<evidence type="ECO:0000269" key="2">
    <source>
    </source>
</evidence>
<evidence type="ECO:0000305" key="3"/>
<name>YG04_SCHPO</name>
<feature type="chain" id="PRO_0000311181" description="Uncharacterized mitochondrial carrier C1604.04">
    <location>
        <begin position="1"/>
        <end position="283"/>
    </location>
</feature>
<feature type="transmembrane region" description="Helical; Name=1" evidence="1">
    <location>
        <begin position="20"/>
        <end position="40"/>
    </location>
</feature>
<feature type="transmembrane region" description="Helical; Name=2" evidence="1">
    <location>
        <begin position="70"/>
        <end position="90"/>
    </location>
</feature>
<feature type="transmembrane region" description="Helical; Name=3" evidence="1">
    <location>
        <begin position="105"/>
        <end position="125"/>
    </location>
</feature>
<feature type="transmembrane region" description="Helical; Name=4" evidence="1">
    <location>
        <begin position="157"/>
        <end position="177"/>
    </location>
</feature>
<feature type="transmembrane region" description="Helical; Name=5" evidence="1">
    <location>
        <begin position="184"/>
        <end position="204"/>
    </location>
</feature>
<feature type="transmembrane region" description="Helical; Name=6" evidence="1">
    <location>
        <begin position="249"/>
        <end position="266"/>
    </location>
</feature>
<feature type="repeat" description="Solcar 1">
    <location>
        <begin position="14"/>
        <end position="95"/>
    </location>
</feature>
<feature type="repeat" description="Solcar 2">
    <location>
        <begin position="102"/>
        <end position="185"/>
    </location>
</feature>
<feature type="repeat" description="Solcar 3">
    <location>
        <begin position="190"/>
        <end position="274"/>
    </location>
</feature>
<organism>
    <name type="scientific">Schizosaccharomyces pombe (strain 972 / ATCC 24843)</name>
    <name type="common">Fission yeast</name>
    <dbReference type="NCBI Taxonomy" id="284812"/>
    <lineage>
        <taxon>Eukaryota</taxon>
        <taxon>Fungi</taxon>
        <taxon>Dikarya</taxon>
        <taxon>Ascomycota</taxon>
        <taxon>Taphrinomycotina</taxon>
        <taxon>Schizosaccharomycetes</taxon>
        <taxon>Schizosaccharomycetales</taxon>
        <taxon>Schizosaccharomycetaceae</taxon>
        <taxon>Schizosaccharomyces</taxon>
    </lineage>
</organism>
<dbReference type="EMBL" id="CU329671">
    <property type="protein sequence ID" value="CAA22337.2"/>
    <property type="molecule type" value="Genomic_DNA"/>
</dbReference>
<dbReference type="PIR" id="T39510">
    <property type="entry name" value="T39510"/>
</dbReference>
<dbReference type="RefSeq" id="NP_596636.2">
    <property type="nucleotide sequence ID" value="NM_001022557.2"/>
</dbReference>
<dbReference type="SMR" id="O94370"/>
<dbReference type="BioGRID" id="276691">
    <property type="interactions" value="1"/>
</dbReference>
<dbReference type="FunCoup" id="O94370">
    <property type="interactions" value="6"/>
</dbReference>
<dbReference type="STRING" id="284812.O94370"/>
<dbReference type="TCDB" id="2.A.29.16.3">
    <property type="family name" value="the mitochondrial carrier (mc) family"/>
</dbReference>
<dbReference type="iPTMnet" id="O94370"/>
<dbReference type="PaxDb" id="4896-SPBC1604.04.1"/>
<dbReference type="EnsemblFungi" id="SPBC1604.04.1">
    <property type="protein sequence ID" value="SPBC1604.04.1:pep"/>
    <property type="gene ID" value="SPBC1604.04"/>
</dbReference>
<dbReference type="KEGG" id="spo:2540155"/>
<dbReference type="PomBase" id="SPBC1604.04"/>
<dbReference type="VEuPathDB" id="FungiDB:SPBC1604.04"/>
<dbReference type="eggNOG" id="KOG0752">
    <property type="taxonomic scope" value="Eukaryota"/>
</dbReference>
<dbReference type="HOGENOM" id="CLU_015166_10_3_1"/>
<dbReference type="InParanoid" id="O94370"/>
<dbReference type="OMA" id="MYVCYGA"/>
<dbReference type="Reactome" id="R-SPO-196819">
    <property type="pathway name" value="Vitamin B1 (thiamin) metabolism"/>
</dbReference>
<dbReference type="PRO" id="PR:O94370"/>
<dbReference type="Proteomes" id="UP000002485">
    <property type="component" value="Chromosome II"/>
</dbReference>
<dbReference type="GO" id="GO:0005743">
    <property type="term" value="C:mitochondrial inner membrane"/>
    <property type="evidence" value="ECO:0000318"/>
    <property type="project" value="GO_Central"/>
</dbReference>
<dbReference type="GO" id="GO:0005739">
    <property type="term" value="C:mitochondrion"/>
    <property type="evidence" value="ECO:0007005"/>
    <property type="project" value="PomBase"/>
</dbReference>
<dbReference type="GO" id="GO:0090422">
    <property type="term" value="F:thiamine pyrophosphate transmembrane transporter activity"/>
    <property type="evidence" value="ECO:0000250"/>
    <property type="project" value="PomBase"/>
</dbReference>
<dbReference type="GO" id="GO:0015234">
    <property type="term" value="F:thiamine transmembrane transporter activity"/>
    <property type="evidence" value="ECO:0000318"/>
    <property type="project" value="GO_Central"/>
</dbReference>
<dbReference type="GO" id="GO:1990545">
    <property type="term" value="P:mitochondrial thiamine pyrophosphate transmembrane transport"/>
    <property type="evidence" value="ECO:0000250"/>
    <property type="project" value="PomBase"/>
</dbReference>
<dbReference type="GO" id="GO:0030974">
    <property type="term" value="P:thiamine pyrophosphate transmembrane transport"/>
    <property type="evidence" value="ECO:0000318"/>
    <property type="project" value="GO_Central"/>
</dbReference>
<dbReference type="Gene3D" id="1.50.40.10">
    <property type="entry name" value="Mitochondrial carrier domain"/>
    <property type="match status" value="1"/>
</dbReference>
<dbReference type="InterPro" id="IPR002067">
    <property type="entry name" value="Mit_carrier"/>
</dbReference>
<dbReference type="InterPro" id="IPR018108">
    <property type="entry name" value="Mitochondrial_sb/sol_carrier"/>
</dbReference>
<dbReference type="InterPro" id="IPR023395">
    <property type="entry name" value="Mt_carrier_dom_sf"/>
</dbReference>
<dbReference type="PANTHER" id="PTHR24089">
    <property type="entry name" value="SOLUTE CARRIER FAMILY 25"/>
    <property type="match status" value="1"/>
</dbReference>
<dbReference type="Pfam" id="PF00153">
    <property type="entry name" value="Mito_carr"/>
    <property type="match status" value="3"/>
</dbReference>
<dbReference type="PRINTS" id="PR00926">
    <property type="entry name" value="MITOCARRIER"/>
</dbReference>
<dbReference type="SUPFAM" id="SSF103506">
    <property type="entry name" value="Mitochondrial carrier"/>
    <property type="match status" value="1"/>
</dbReference>
<dbReference type="PROSITE" id="PS50920">
    <property type="entry name" value="SOLCAR"/>
    <property type="match status" value="3"/>
</dbReference>
<sequence length="283" mass="31025">MGLAKQKDSQEFAQPVWHYTLAGGISSVICRFMIAPFDVIKIRMQITQSSLRPVFKETVQKEGVRALWRGNVVAELLYLVYGAAEFVAFSKLKHLTENLAMNDHAVNFLCGTSAGIFATLTSYPLDTMRTKFASYAKTPHMLPATKKIYAEAGIKGFFPGLKFSVIQIGPYAGCFFMFYRASEAVLSPLGLALSSTLSGVIAGAGSKAIMFPVDTVVKTLQTFPSNYKSFKDCFLSIYRNSGIKGLYRGLSVSMLKVAPGRAITMLIYEQTLQGLRTLSSPEA</sequence>